<organism>
    <name type="scientific">Cyanidium caldarium</name>
    <name type="common">Red alga</name>
    <dbReference type="NCBI Taxonomy" id="2771"/>
    <lineage>
        <taxon>Eukaryota</taxon>
        <taxon>Rhodophyta</taxon>
        <taxon>Bangiophyceae</taxon>
        <taxon>Cyanidiales</taxon>
        <taxon>Cyanidiaceae</taxon>
        <taxon>Cyanidium</taxon>
    </lineage>
</organism>
<protein>
    <recommendedName>
        <fullName evidence="3">Large ribosomal subunit protein uL4c</fullName>
    </recommendedName>
    <alternativeName>
        <fullName>50S ribosomal protein L4, chloroplastic</fullName>
    </alternativeName>
</protein>
<accession>Q9TLT3</accession>
<name>RK4_CYACA</name>
<reference key="1">
    <citation type="journal article" date="2000" name="J. Mol. Evol.">
        <title>The structure and gene repertoire of an ancient red algal plastid genome.</title>
        <authorList>
            <person name="Gloeckner G."/>
            <person name="Rosenthal A."/>
            <person name="Valentin K.-U."/>
        </authorList>
    </citation>
    <scope>NUCLEOTIDE SEQUENCE [LARGE SCALE GENOMIC DNA]</scope>
    <source>
        <strain>RK-1</strain>
    </source>
</reference>
<keyword id="KW-0150">Chloroplast</keyword>
<keyword id="KW-0934">Plastid</keyword>
<keyword id="KW-0687">Ribonucleoprotein</keyword>
<keyword id="KW-0689">Ribosomal protein</keyword>
<keyword id="KW-0694">RNA-binding</keyword>
<keyword id="KW-0699">rRNA-binding</keyword>
<dbReference type="EMBL" id="AF022186">
    <property type="protein sequence ID" value="AAF12908.1"/>
    <property type="molecule type" value="Genomic_DNA"/>
</dbReference>
<dbReference type="RefSeq" id="NP_045186.1">
    <property type="nucleotide sequence ID" value="NC_001840.1"/>
</dbReference>
<dbReference type="SMR" id="Q9TLT3"/>
<dbReference type="GeneID" id="800226"/>
<dbReference type="GO" id="GO:0009507">
    <property type="term" value="C:chloroplast"/>
    <property type="evidence" value="ECO:0007669"/>
    <property type="project" value="UniProtKB-SubCell"/>
</dbReference>
<dbReference type="GO" id="GO:1990904">
    <property type="term" value="C:ribonucleoprotein complex"/>
    <property type="evidence" value="ECO:0007669"/>
    <property type="project" value="UniProtKB-KW"/>
</dbReference>
<dbReference type="GO" id="GO:0005840">
    <property type="term" value="C:ribosome"/>
    <property type="evidence" value="ECO:0007669"/>
    <property type="project" value="UniProtKB-KW"/>
</dbReference>
<dbReference type="GO" id="GO:0019843">
    <property type="term" value="F:rRNA binding"/>
    <property type="evidence" value="ECO:0007669"/>
    <property type="project" value="UniProtKB-UniRule"/>
</dbReference>
<dbReference type="GO" id="GO:0003735">
    <property type="term" value="F:structural constituent of ribosome"/>
    <property type="evidence" value="ECO:0007669"/>
    <property type="project" value="InterPro"/>
</dbReference>
<dbReference type="GO" id="GO:0006412">
    <property type="term" value="P:translation"/>
    <property type="evidence" value="ECO:0007669"/>
    <property type="project" value="UniProtKB-UniRule"/>
</dbReference>
<dbReference type="Gene3D" id="3.40.1370.10">
    <property type="match status" value="1"/>
</dbReference>
<dbReference type="HAMAP" id="MF_01328_B">
    <property type="entry name" value="Ribosomal_uL4_B"/>
    <property type="match status" value="1"/>
</dbReference>
<dbReference type="InterPro" id="IPR002136">
    <property type="entry name" value="Ribosomal_uL4"/>
</dbReference>
<dbReference type="InterPro" id="IPR013005">
    <property type="entry name" value="Ribosomal_uL4-like"/>
</dbReference>
<dbReference type="InterPro" id="IPR023574">
    <property type="entry name" value="Ribosomal_uL4_dom_sf"/>
</dbReference>
<dbReference type="NCBIfam" id="TIGR03953">
    <property type="entry name" value="rplD_bact"/>
    <property type="match status" value="1"/>
</dbReference>
<dbReference type="PANTHER" id="PTHR10746">
    <property type="entry name" value="50S RIBOSOMAL PROTEIN L4"/>
    <property type="match status" value="1"/>
</dbReference>
<dbReference type="PANTHER" id="PTHR10746:SF17">
    <property type="entry name" value="LARGE RIBOSOMAL SUBUNIT PROTEIN UL4C"/>
    <property type="match status" value="1"/>
</dbReference>
<dbReference type="Pfam" id="PF00573">
    <property type="entry name" value="Ribosomal_L4"/>
    <property type="match status" value="1"/>
</dbReference>
<dbReference type="SUPFAM" id="SSF52166">
    <property type="entry name" value="Ribosomal protein L4"/>
    <property type="match status" value="1"/>
</dbReference>
<gene>
    <name type="primary">rpl4</name>
</gene>
<comment type="function">
    <text evidence="1">Probably binds the 23S rRNA.</text>
</comment>
<comment type="subunit">
    <text>Part of the 50S ribosomal subunit.</text>
</comment>
<comment type="subcellular location">
    <subcellularLocation>
        <location>Plastid</location>
        <location>Chloroplast</location>
    </subcellularLocation>
</comment>
<comment type="similarity">
    <text evidence="3">Belongs to the universal ribosomal protein uL4 family.</text>
</comment>
<evidence type="ECO:0000250" key="1"/>
<evidence type="ECO:0000256" key="2">
    <source>
        <dbReference type="SAM" id="MobiDB-lite"/>
    </source>
</evidence>
<evidence type="ECO:0000305" key="3"/>
<sequence>MKFMVTEQKTLIYPVINLITGQHNYIGFKCRISTNNANYVVHRVFSIQNKLSREHTASTKTKSQVRGGGKKPWKQKGTGRARAGSIRSPLWRGGGVVFGPKPKNVFFKINKKEIRLALYTVLSNALPKTTVVSSLEGLPNFISTQALIKFLRSLNVSLDNRVLIVVEKKETPLFLSCRNIKNLALIQADHLNVKSVILAQSLVVTLQALKIIYKTFNDN</sequence>
<proteinExistence type="inferred from homology"/>
<geneLocation type="chloroplast"/>
<feature type="chain" id="PRO_0000129321" description="Large ribosomal subunit protein uL4c">
    <location>
        <begin position="1"/>
        <end position="219"/>
    </location>
</feature>
<feature type="region of interest" description="Disordered" evidence="2">
    <location>
        <begin position="53"/>
        <end position="81"/>
    </location>
</feature>
<feature type="compositionally biased region" description="Basic residues" evidence="2">
    <location>
        <begin position="68"/>
        <end position="79"/>
    </location>
</feature>